<accession>C5D7Q0</accession>
<gene>
    <name evidence="1" type="primary">hprK</name>
    <name type="ordered locus">GWCH70_2987</name>
</gene>
<evidence type="ECO:0000255" key="1">
    <source>
        <dbReference type="HAMAP-Rule" id="MF_01249"/>
    </source>
</evidence>
<reference key="1">
    <citation type="submission" date="2009-06" db="EMBL/GenBank/DDBJ databases">
        <title>Complete sequence of chromosome of Geopacillus sp. WCH70.</title>
        <authorList>
            <consortium name="US DOE Joint Genome Institute"/>
            <person name="Lucas S."/>
            <person name="Copeland A."/>
            <person name="Lapidus A."/>
            <person name="Glavina del Rio T."/>
            <person name="Dalin E."/>
            <person name="Tice H."/>
            <person name="Bruce D."/>
            <person name="Goodwin L."/>
            <person name="Pitluck S."/>
            <person name="Chertkov O."/>
            <person name="Brettin T."/>
            <person name="Detter J.C."/>
            <person name="Han C."/>
            <person name="Larimer F."/>
            <person name="Land M."/>
            <person name="Hauser L."/>
            <person name="Kyrpides N."/>
            <person name="Mikhailova N."/>
            <person name="Brumm P."/>
            <person name="Mead D.A."/>
            <person name="Richardson P."/>
        </authorList>
    </citation>
    <scope>NUCLEOTIDE SEQUENCE [LARGE SCALE GENOMIC DNA]</scope>
    <source>
        <strain>WCH70</strain>
    </source>
</reference>
<dbReference type="EC" id="2.7.11.-" evidence="1"/>
<dbReference type="EC" id="2.7.4.-" evidence="1"/>
<dbReference type="EMBL" id="CP001638">
    <property type="protein sequence ID" value="ACS25660.1"/>
    <property type="molecule type" value="Genomic_DNA"/>
</dbReference>
<dbReference type="SMR" id="C5D7Q0"/>
<dbReference type="STRING" id="471223.GWCH70_2987"/>
<dbReference type="KEGG" id="gwc:GWCH70_2987"/>
<dbReference type="eggNOG" id="COG1493">
    <property type="taxonomic scope" value="Bacteria"/>
</dbReference>
<dbReference type="HOGENOM" id="CLU_052030_0_1_9"/>
<dbReference type="OrthoDB" id="9778803at2"/>
<dbReference type="GO" id="GO:0005524">
    <property type="term" value="F:ATP binding"/>
    <property type="evidence" value="ECO:0007669"/>
    <property type="project" value="UniProtKB-UniRule"/>
</dbReference>
<dbReference type="GO" id="GO:0000287">
    <property type="term" value="F:magnesium ion binding"/>
    <property type="evidence" value="ECO:0007669"/>
    <property type="project" value="UniProtKB-UniRule"/>
</dbReference>
<dbReference type="GO" id="GO:0000155">
    <property type="term" value="F:phosphorelay sensor kinase activity"/>
    <property type="evidence" value="ECO:0007669"/>
    <property type="project" value="InterPro"/>
</dbReference>
<dbReference type="GO" id="GO:0004674">
    <property type="term" value="F:protein serine/threonine kinase activity"/>
    <property type="evidence" value="ECO:0007669"/>
    <property type="project" value="UniProtKB-KW"/>
</dbReference>
<dbReference type="GO" id="GO:0004712">
    <property type="term" value="F:protein serine/threonine/tyrosine kinase activity"/>
    <property type="evidence" value="ECO:0007669"/>
    <property type="project" value="UniProtKB-UniRule"/>
</dbReference>
<dbReference type="GO" id="GO:0006109">
    <property type="term" value="P:regulation of carbohydrate metabolic process"/>
    <property type="evidence" value="ECO:0007669"/>
    <property type="project" value="UniProtKB-UniRule"/>
</dbReference>
<dbReference type="CDD" id="cd01918">
    <property type="entry name" value="HprK_C"/>
    <property type="match status" value="1"/>
</dbReference>
<dbReference type="FunFam" id="3.40.1390.20:FF:000002">
    <property type="entry name" value="HPr kinase/phosphorylase"/>
    <property type="match status" value="1"/>
</dbReference>
<dbReference type="FunFam" id="3.40.50.300:FF:000174">
    <property type="entry name" value="HPr kinase/phosphorylase"/>
    <property type="match status" value="1"/>
</dbReference>
<dbReference type="Gene3D" id="3.40.1390.20">
    <property type="entry name" value="HprK N-terminal domain-like"/>
    <property type="match status" value="1"/>
</dbReference>
<dbReference type="Gene3D" id="3.40.50.300">
    <property type="entry name" value="P-loop containing nucleotide triphosphate hydrolases"/>
    <property type="match status" value="1"/>
</dbReference>
<dbReference type="HAMAP" id="MF_01249">
    <property type="entry name" value="HPr_kinase"/>
    <property type="match status" value="1"/>
</dbReference>
<dbReference type="InterPro" id="IPR003755">
    <property type="entry name" value="HPr(Ser)_kin/Pase"/>
</dbReference>
<dbReference type="InterPro" id="IPR011104">
    <property type="entry name" value="Hpr_kin/Pase_C"/>
</dbReference>
<dbReference type="InterPro" id="IPR011126">
    <property type="entry name" value="Hpr_kin/Pase_Hpr_N"/>
</dbReference>
<dbReference type="InterPro" id="IPR027417">
    <property type="entry name" value="P-loop_NTPase"/>
</dbReference>
<dbReference type="InterPro" id="IPR028979">
    <property type="entry name" value="Ser_kin/Pase_Hpr-like_N_sf"/>
</dbReference>
<dbReference type="NCBIfam" id="TIGR00679">
    <property type="entry name" value="hpr-ser"/>
    <property type="match status" value="1"/>
</dbReference>
<dbReference type="PANTHER" id="PTHR30305:SF1">
    <property type="entry name" value="HPR KINASE_PHOSPHORYLASE"/>
    <property type="match status" value="1"/>
</dbReference>
<dbReference type="PANTHER" id="PTHR30305">
    <property type="entry name" value="PROTEIN YJDM-RELATED"/>
    <property type="match status" value="1"/>
</dbReference>
<dbReference type="Pfam" id="PF07475">
    <property type="entry name" value="Hpr_kinase_C"/>
    <property type="match status" value="1"/>
</dbReference>
<dbReference type="Pfam" id="PF02603">
    <property type="entry name" value="Hpr_kinase_N"/>
    <property type="match status" value="1"/>
</dbReference>
<dbReference type="SUPFAM" id="SSF75138">
    <property type="entry name" value="HprK N-terminal domain-like"/>
    <property type="match status" value="1"/>
</dbReference>
<dbReference type="SUPFAM" id="SSF53795">
    <property type="entry name" value="PEP carboxykinase-like"/>
    <property type="match status" value="1"/>
</dbReference>
<keyword id="KW-0067">ATP-binding</keyword>
<keyword id="KW-0119">Carbohydrate metabolism</keyword>
<keyword id="KW-0418">Kinase</keyword>
<keyword id="KW-0460">Magnesium</keyword>
<keyword id="KW-0479">Metal-binding</keyword>
<keyword id="KW-0511">Multifunctional enzyme</keyword>
<keyword id="KW-0547">Nucleotide-binding</keyword>
<keyword id="KW-0723">Serine/threonine-protein kinase</keyword>
<keyword id="KW-0808">Transferase</keyword>
<proteinExistence type="inferred from homology"/>
<comment type="function">
    <text evidence="1">Catalyzes the ATP- as well as the pyrophosphate-dependent phosphorylation of a specific serine residue in HPr, a phosphocarrier protein of the phosphoenolpyruvate-dependent sugar phosphotransferase system (PTS). HprK/P also catalyzes the pyrophosphate-producing, inorganic phosphate-dependent dephosphorylation (phosphorolysis) of seryl-phosphorylated HPr (P-Ser-HPr). The two antagonistic activities of HprK/P are regulated by several intracellular metabolites, which change their concentration in response to the absence or presence of rapidly metabolisable carbon sources (glucose, fructose, etc.) in the growth medium. Also phosphorylates/dephosphorylates the HPr-like catabolite repression protein crh on a specific serine residue. Therefore, by controlling the phosphorylation state of HPr and crh, HPrK/P is a sensor enzyme that plays a major role in the regulation of carbon metabolism and sugar transport: it mediates carbon catabolite repression (CCR), and regulates PTS-catalyzed carbohydrate uptake and inducer exclusion.</text>
</comment>
<comment type="catalytic activity">
    <reaction evidence="1">
        <text>[HPr protein]-L-serine + ATP = [HPr protein]-O-phospho-L-serine + ADP + H(+)</text>
        <dbReference type="Rhea" id="RHEA:46600"/>
        <dbReference type="Rhea" id="RHEA-COMP:11602"/>
        <dbReference type="Rhea" id="RHEA-COMP:11603"/>
        <dbReference type="ChEBI" id="CHEBI:15378"/>
        <dbReference type="ChEBI" id="CHEBI:29999"/>
        <dbReference type="ChEBI" id="CHEBI:30616"/>
        <dbReference type="ChEBI" id="CHEBI:83421"/>
        <dbReference type="ChEBI" id="CHEBI:456216"/>
    </reaction>
</comment>
<comment type="catalytic activity">
    <reaction evidence="1">
        <text>[HPr protein]-O-phospho-L-serine + phosphate + H(+) = [HPr protein]-L-serine + diphosphate</text>
        <dbReference type="Rhea" id="RHEA:46604"/>
        <dbReference type="Rhea" id="RHEA-COMP:11602"/>
        <dbReference type="Rhea" id="RHEA-COMP:11603"/>
        <dbReference type="ChEBI" id="CHEBI:15378"/>
        <dbReference type="ChEBI" id="CHEBI:29999"/>
        <dbReference type="ChEBI" id="CHEBI:33019"/>
        <dbReference type="ChEBI" id="CHEBI:43474"/>
        <dbReference type="ChEBI" id="CHEBI:83421"/>
    </reaction>
</comment>
<comment type="cofactor">
    <cofactor evidence="1">
        <name>Mg(2+)</name>
        <dbReference type="ChEBI" id="CHEBI:18420"/>
    </cofactor>
</comment>
<comment type="subunit">
    <text evidence="1">Homohexamer.</text>
</comment>
<comment type="domain">
    <text evidence="1">The Walker A ATP-binding motif also binds Pi and PPi.</text>
</comment>
<comment type="miscellaneous">
    <text evidence="1">Both phosphorylation and phosphorolysis are carried out by the same active site and suggest a common mechanism for both reactions.</text>
</comment>
<comment type="similarity">
    <text evidence="1">Belongs to the HPrK/P family.</text>
</comment>
<protein>
    <recommendedName>
        <fullName evidence="1">HPr kinase/phosphorylase</fullName>
        <shortName evidence="1">HPrK/P</shortName>
        <ecNumber evidence="1">2.7.11.-</ecNumber>
        <ecNumber evidence="1">2.7.4.-</ecNumber>
    </recommendedName>
    <alternativeName>
        <fullName evidence="1">HPr(Ser) kinase/phosphorylase</fullName>
    </alternativeName>
</protein>
<name>HPRK_GEOSW</name>
<feature type="chain" id="PRO_1000214109" description="HPr kinase/phosphorylase">
    <location>
        <begin position="1"/>
        <end position="311"/>
    </location>
</feature>
<feature type="region of interest" description="Important for the catalytic mechanism of both phosphorylation and dephosphorylation" evidence="1">
    <location>
        <begin position="201"/>
        <end position="210"/>
    </location>
</feature>
<feature type="region of interest" description="Important for the catalytic mechanism of dephosphorylation" evidence="1">
    <location>
        <begin position="264"/>
        <end position="269"/>
    </location>
</feature>
<feature type="active site" evidence="1">
    <location>
        <position position="138"/>
    </location>
</feature>
<feature type="active site" evidence="1">
    <location>
        <position position="159"/>
    </location>
</feature>
<feature type="active site" description="Proton acceptor; for phosphorylation activity. Proton donor; for dephosphorylation activity" evidence="1">
    <location>
        <position position="177"/>
    </location>
</feature>
<feature type="active site" evidence="1">
    <location>
        <position position="243"/>
    </location>
</feature>
<feature type="binding site" evidence="1">
    <location>
        <begin position="153"/>
        <end position="160"/>
    </location>
    <ligand>
        <name>ATP</name>
        <dbReference type="ChEBI" id="CHEBI:30616"/>
    </ligand>
</feature>
<feature type="binding site" evidence="1">
    <location>
        <position position="160"/>
    </location>
    <ligand>
        <name>Mg(2+)</name>
        <dbReference type="ChEBI" id="CHEBI:18420"/>
    </ligand>
</feature>
<feature type="binding site" evidence="1">
    <location>
        <position position="202"/>
    </location>
    <ligand>
        <name>Mg(2+)</name>
        <dbReference type="ChEBI" id="CHEBI:18420"/>
    </ligand>
</feature>
<organism>
    <name type="scientific">Geobacillus sp. (strain WCH70)</name>
    <dbReference type="NCBI Taxonomy" id="471223"/>
    <lineage>
        <taxon>Bacteria</taxon>
        <taxon>Bacillati</taxon>
        <taxon>Bacillota</taxon>
        <taxon>Bacilli</taxon>
        <taxon>Bacillales</taxon>
        <taxon>Anoxybacillaceae</taxon>
        <taxon>Geobacillus</taxon>
    </lineage>
</organism>
<sequence>MPKVRTKDIIEKFQLELVSGAEGIHRPITTSDLSRPGIEMAGYFTYYPAERIQLLGKTELSFYETLSLEEKKMRMERLCTDITPGIIISRGLEVPPELIEASERQSVPVMRSTMKTTRLSSRLTNYLESKLAPTTAVHGVLVDVYGVGVLITGKSGVGKSETALELVKRGHRLVADDCVEIRQEDEGVLVGSAPELIEHLLEIRGLGIINMMTLFGAGAVRTHKRISLVIDLELWDPNKQYDRLGLEEEKVKILDTELTKLTIPVRPGRNLAVIVEVAAMNFRLKRMGVNAAEEFSARLTDAIEDGEHDYE</sequence>